<evidence type="ECO:0000255" key="1">
    <source>
        <dbReference type="HAMAP-Rule" id="MF_00500"/>
    </source>
</evidence>
<evidence type="ECO:0000305" key="2"/>
<feature type="chain" id="PRO_1000126402" description="Small ribosomal subunit protein bS20">
    <location>
        <begin position="1"/>
        <end position="87"/>
    </location>
</feature>
<organism>
    <name type="scientific">Beijerinckia indica subsp. indica (strain ATCC 9039 / DSM 1715 / NCIMB 8712)</name>
    <dbReference type="NCBI Taxonomy" id="395963"/>
    <lineage>
        <taxon>Bacteria</taxon>
        <taxon>Pseudomonadati</taxon>
        <taxon>Pseudomonadota</taxon>
        <taxon>Alphaproteobacteria</taxon>
        <taxon>Hyphomicrobiales</taxon>
        <taxon>Beijerinckiaceae</taxon>
        <taxon>Beijerinckia</taxon>
    </lineage>
</organism>
<sequence>MANTPSAKKAVRKIERRTAINKSRRSQMRTYIRKVEEAIASGDAAAATSALQSAAPLVMRAAQKGIVHKNTASRKVSRLSKRVKALA</sequence>
<dbReference type="EMBL" id="CP001016">
    <property type="protein sequence ID" value="ACB93660.1"/>
    <property type="molecule type" value="Genomic_DNA"/>
</dbReference>
<dbReference type="RefSeq" id="WP_012383018.1">
    <property type="nucleotide sequence ID" value="NC_010581.1"/>
</dbReference>
<dbReference type="SMR" id="B2IAW0"/>
<dbReference type="STRING" id="395963.Bind_0001"/>
<dbReference type="KEGG" id="bid:Bind_0001"/>
<dbReference type="eggNOG" id="COG0268">
    <property type="taxonomic scope" value="Bacteria"/>
</dbReference>
<dbReference type="HOGENOM" id="CLU_160655_3_0_5"/>
<dbReference type="OrthoDB" id="9807974at2"/>
<dbReference type="Proteomes" id="UP000001695">
    <property type="component" value="Chromosome"/>
</dbReference>
<dbReference type="GO" id="GO:0005829">
    <property type="term" value="C:cytosol"/>
    <property type="evidence" value="ECO:0007669"/>
    <property type="project" value="TreeGrafter"/>
</dbReference>
<dbReference type="GO" id="GO:0015935">
    <property type="term" value="C:small ribosomal subunit"/>
    <property type="evidence" value="ECO:0007669"/>
    <property type="project" value="TreeGrafter"/>
</dbReference>
<dbReference type="GO" id="GO:0070181">
    <property type="term" value="F:small ribosomal subunit rRNA binding"/>
    <property type="evidence" value="ECO:0007669"/>
    <property type="project" value="TreeGrafter"/>
</dbReference>
<dbReference type="GO" id="GO:0003735">
    <property type="term" value="F:structural constituent of ribosome"/>
    <property type="evidence" value="ECO:0007669"/>
    <property type="project" value="InterPro"/>
</dbReference>
<dbReference type="GO" id="GO:0006412">
    <property type="term" value="P:translation"/>
    <property type="evidence" value="ECO:0007669"/>
    <property type="project" value="UniProtKB-UniRule"/>
</dbReference>
<dbReference type="FunFam" id="1.20.58.110:FF:000001">
    <property type="entry name" value="30S ribosomal protein S20"/>
    <property type="match status" value="1"/>
</dbReference>
<dbReference type="Gene3D" id="1.20.58.110">
    <property type="entry name" value="Ribosomal protein S20"/>
    <property type="match status" value="1"/>
</dbReference>
<dbReference type="HAMAP" id="MF_00500">
    <property type="entry name" value="Ribosomal_bS20"/>
    <property type="match status" value="1"/>
</dbReference>
<dbReference type="InterPro" id="IPR002583">
    <property type="entry name" value="Ribosomal_bS20"/>
</dbReference>
<dbReference type="InterPro" id="IPR036510">
    <property type="entry name" value="Ribosomal_bS20_sf"/>
</dbReference>
<dbReference type="NCBIfam" id="TIGR00029">
    <property type="entry name" value="S20"/>
    <property type="match status" value="1"/>
</dbReference>
<dbReference type="PANTHER" id="PTHR33398">
    <property type="entry name" value="30S RIBOSOMAL PROTEIN S20"/>
    <property type="match status" value="1"/>
</dbReference>
<dbReference type="PANTHER" id="PTHR33398:SF1">
    <property type="entry name" value="SMALL RIBOSOMAL SUBUNIT PROTEIN BS20C"/>
    <property type="match status" value="1"/>
</dbReference>
<dbReference type="Pfam" id="PF01649">
    <property type="entry name" value="Ribosomal_S20p"/>
    <property type="match status" value="1"/>
</dbReference>
<dbReference type="SUPFAM" id="SSF46992">
    <property type="entry name" value="Ribosomal protein S20"/>
    <property type="match status" value="1"/>
</dbReference>
<proteinExistence type="inferred from homology"/>
<name>RS20_BEII9</name>
<gene>
    <name evidence="1" type="primary">rpsT</name>
    <name type="ordered locus">Bind_0001</name>
</gene>
<accession>B2IAW0</accession>
<keyword id="KW-1185">Reference proteome</keyword>
<keyword id="KW-0687">Ribonucleoprotein</keyword>
<keyword id="KW-0689">Ribosomal protein</keyword>
<keyword id="KW-0694">RNA-binding</keyword>
<keyword id="KW-0699">rRNA-binding</keyword>
<protein>
    <recommendedName>
        <fullName evidence="1">Small ribosomal subunit protein bS20</fullName>
    </recommendedName>
    <alternativeName>
        <fullName evidence="2">30S ribosomal protein S20</fullName>
    </alternativeName>
</protein>
<reference key="1">
    <citation type="journal article" date="2010" name="J. Bacteriol.">
        <title>Complete genome sequence of Beijerinckia indica subsp. indica.</title>
        <authorList>
            <person name="Tamas I."/>
            <person name="Dedysh S.N."/>
            <person name="Liesack W."/>
            <person name="Stott M.B."/>
            <person name="Alam M."/>
            <person name="Murrell J.C."/>
            <person name="Dunfield P.F."/>
        </authorList>
    </citation>
    <scope>NUCLEOTIDE SEQUENCE [LARGE SCALE GENOMIC DNA]</scope>
    <source>
        <strain>ATCC 9039 / DSM 1715 / NCIMB 8712</strain>
    </source>
</reference>
<comment type="function">
    <text evidence="1">Binds directly to 16S ribosomal RNA.</text>
</comment>
<comment type="similarity">
    <text evidence="1">Belongs to the bacterial ribosomal protein bS20 family.</text>
</comment>